<organism>
    <name type="scientific">Vibrio cholerae serotype O1 (strain ATCC 39315 / El Tor Inaba N16961)</name>
    <dbReference type="NCBI Taxonomy" id="243277"/>
    <lineage>
        <taxon>Bacteria</taxon>
        <taxon>Pseudomonadati</taxon>
        <taxon>Pseudomonadota</taxon>
        <taxon>Gammaproteobacteria</taxon>
        <taxon>Vibrionales</taxon>
        <taxon>Vibrionaceae</taxon>
        <taxon>Vibrio</taxon>
    </lineage>
</organism>
<keyword id="KW-0501">Molybdenum cofactor biosynthesis</keyword>
<keyword id="KW-1185">Reference proteome</keyword>
<keyword id="KW-0808">Transferase</keyword>
<comment type="function">
    <text evidence="1">Converts molybdopterin precursor Z into molybdopterin. This requires the incorporation of two sulfur atoms into precursor Z to generate a dithiolene group. The sulfur is provided by MoaD (By similarity).</text>
</comment>
<comment type="catalytic activity">
    <reaction>
        <text>2 [molybdopterin-synthase sulfur-carrier protein]-C-terminal-Gly-aminoethanethioate + cyclic pyranopterin phosphate + H2O = molybdopterin + 2 [molybdopterin-synthase sulfur-carrier protein]-C-terminal Gly-Gly + 2 H(+)</text>
        <dbReference type="Rhea" id="RHEA:26333"/>
        <dbReference type="Rhea" id="RHEA-COMP:12202"/>
        <dbReference type="Rhea" id="RHEA-COMP:19907"/>
        <dbReference type="ChEBI" id="CHEBI:15377"/>
        <dbReference type="ChEBI" id="CHEBI:15378"/>
        <dbReference type="ChEBI" id="CHEBI:58698"/>
        <dbReference type="ChEBI" id="CHEBI:59648"/>
        <dbReference type="ChEBI" id="CHEBI:90778"/>
        <dbReference type="ChEBI" id="CHEBI:232372"/>
        <dbReference type="EC" id="2.8.1.12"/>
    </reaction>
</comment>
<comment type="pathway">
    <text>Cofactor biosynthesis; molybdopterin biosynthesis.</text>
</comment>
<comment type="subunit">
    <text evidence="1">Heterotetramer of 2 MoaD subunits and 2 MoaE subunits. Also stable as homodimer. The enzyme changes between these two forms during catalysis (By similarity).</text>
</comment>
<comment type="similarity">
    <text evidence="2">Belongs to the MoaE family.</text>
</comment>
<reference key="1">
    <citation type="journal article" date="2000" name="Nature">
        <title>DNA sequence of both chromosomes of the cholera pathogen Vibrio cholerae.</title>
        <authorList>
            <person name="Heidelberg J.F."/>
            <person name="Eisen J.A."/>
            <person name="Nelson W.C."/>
            <person name="Clayton R.A."/>
            <person name="Gwinn M.L."/>
            <person name="Dodson R.J."/>
            <person name="Haft D.H."/>
            <person name="Hickey E.K."/>
            <person name="Peterson J.D."/>
            <person name="Umayam L.A."/>
            <person name="Gill S.R."/>
            <person name="Nelson K.E."/>
            <person name="Read T.D."/>
            <person name="Tettelin H."/>
            <person name="Richardson D.L."/>
            <person name="Ermolaeva M.D."/>
            <person name="Vamathevan J.J."/>
            <person name="Bass S."/>
            <person name="Qin H."/>
            <person name="Dragoi I."/>
            <person name="Sellers P."/>
            <person name="McDonald L.A."/>
            <person name="Utterback T.R."/>
            <person name="Fleischmann R.D."/>
            <person name="Nierman W.C."/>
            <person name="White O."/>
            <person name="Salzberg S.L."/>
            <person name="Smith H.O."/>
            <person name="Colwell R.R."/>
            <person name="Mekalanos J.J."/>
            <person name="Venter J.C."/>
            <person name="Fraser C.M."/>
        </authorList>
    </citation>
    <scope>NUCLEOTIDE SEQUENCE [LARGE SCALE GENOMIC DNA]</scope>
    <source>
        <strain>ATCC 39315 / El Tor Inaba N16961</strain>
    </source>
</reference>
<protein>
    <recommendedName>
        <fullName>Molybdopterin synthase catalytic subunit</fullName>
        <ecNumber>2.8.1.12</ecNumber>
    </recommendedName>
    <alternativeName>
        <fullName>MPT synthase subunit 2</fullName>
    </alternativeName>
    <alternativeName>
        <fullName>Molybdenum cofactor biosynthesis protein E</fullName>
    </alternativeName>
    <alternativeName>
        <fullName>Molybdopterin-converting factor large subunit</fullName>
    </alternativeName>
    <alternativeName>
        <fullName>Molybdopterin-converting factor subunit 2</fullName>
    </alternativeName>
</protein>
<accession>Q9KT77</accession>
<sequence>MDHRVSVQKEDFSVAQEYEALAQGSQAGAVVTFVGKVRDMNLGDNVVGLHLEHYPGMTEKSLLEICDMAQERWPLQRVRVIHRIGDMLSGDQIVLVGVSSAHRNAAFAACEFIMDYLKTRAPFWKKELTTEASRWIDSRDSDHQAAQRWE</sequence>
<evidence type="ECO:0000250" key="1"/>
<evidence type="ECO:0000305" key="2"/>
<gene>
    <name type="primary">moaE</name>
    <name type="ordered locus">VC_1028</name>
</gene>
<name>MOAE_VIBCH</name>
<proteinExistence type="inferred from homology"/>
<feature type="chain" id="PRO_0000163107" description="Molybdopterin synthase catalytic subunit">
    <location>
        <begin position="1"/>
        <end position="150"/>
    </location>
</feature>
<feature type="binding site" evidence="1">
    <location>
        <begin position="36"/>
        <end position="38"/>
    </location>
    <ligand>
        <name>substrate</name>
    </ligand>
</feature>
<feature type="binding site" evidence="1">
    <location>
        <begin position="102"/>
        <end position="103"/>
    </location>
    <ligand>
        <name>substrate</name>
    </ligand>
</feature>
<feature type="binding site" evidence="1">
    <location>
        <position position="118"/>
    </location>
    <ligand>
        <name>substrate</name>
    </ligand>
</feature>
<feature type="binding site" evidence="1">
    <location>
        <begin position="125"/>
        <end position="127"/>
    </location>
    <ligand>
        <name>substrate</name>
    </ligand>
</feature>
<dbReference type="EC" id="2.8.1.12"/>
<dbReference type="EMBL" id="AE003852">
    <property type="protein sequence ID" value="AAF94187.1"/>
    <property type="molecule type" value="Genomic_DNA"/>
</dbReference>
<dbReference type="PIR" id="B82251">
    <property type="entry name" value="B82251"/>
</dbReference>
<dbReference type="RefSeq" id="NP_230673.1">
    <property type="nucleotide sequence ID" value="NC_002505.1"/>
</dbReference>
<dbReference type="RefSeq" id="WP_000350081.1">
    <property type="nucleotide sequence ID" value="NZ_LT906614.1"/>
</dbReference>
<dbReference type="SMR" id="Q9KT77"/>
<dbReference type="STRING" id="243277.VC_1028"/>
<dbReference type="DNASU" id="2614298"/>
<dbReference type="EnsemblBacteria" id="AAF94187">
    <property type="protein sequence ID" value="AAF94187"/>
    <property type="gene ID" value="VC_1028"/>
</dbReference>
<dbReference type="KEGG" id="vch:VC_1028"/>
<dbReference type="PATRIC" id="fig|243277.26.peg.982"/>
<dbReference type="eggNOG" id="COG0314">
    <property type="taxonomic scope" value="Bacteria"/>
</dbReference>
<dbReference type="HOGENOM" id="CLU_089568_2_1_6"/>
<dbReference type="UniPathway" id="UPA00344"/>
<dbReference type="Proteomes" id="UP000000584">
    <property type="component" value="Chromosome 1"/>
</dbReference>
<dbReference type="GO" id="GO:0005829">
    <property type="term" value="C:cytosol"/>
    <property type="evidence" value="ECO:0000318"/>
    <property type="project" value="GO_Central"/>
</dbReference>
<dbReference type="GO" id="GO:0030366">
    <property type="term" value="F:molybdopterin synthase activity"/>
    <property type="evidence" value="ECO:0007669"/>
    <property type="project" value="UniProtKB-EC"/>
</dbReference>
<dbReference type="GO" id="GO:0006777">
    <property type="term" value="P:Mo-molybdopterin cofactor biosynthetic process"/>
    <property type="evidence" value="ECO:0007669"/>
    <property type="project" value="UniProtKB-KW"/>
</dbReference>
<dbReference type="CDD" id="cd00756">
    <property type="entry name" value="MoaE"/>
    <property type="match status" value="1"/>
</dbReference>
<dbReference type="FunFam" id="3.90.1170.40:FF:000001">
    <property type="entry name" value="Molybdopterin synthase catalytic subunit MoaE"/>
    <property type="match status" value="1"/>
</dbReference>
<dbReference type="Gene3D" id="3.90.1170.40">
    <property type="entry name" value="Molybdopterin biosynthesis MoaE subunit"/>
    <property type="match status" value="1"/>
</dbReference>
<dbReference type="InterPro" id="IPR036563">
    <property type="entry name" value="MoaE_sf"/>
</dbReference>
<dbReference type="InterPro" id="IPR003448">
    <property type="entry name" value="Mopterin_biosynth_MoaE"/>
</dbReference>
<dbReference type="NCBIfam" id="NF007959">
    <property type="entry name" value="PRK10678.1"/>
    <property type="match status" value="1"/>
</dbReference>
<dbReference type="PANTHER" id="PTHR23404">
    <property type="entry name" value="MOLYBDOPTERIN SYNTHASE RELATED"/>
    <property type="match status" value="1"/>
</dbReference>
<dbReference type="Pfam" id="PF02391">
    <property type="entry name" value="MoaE"/>
    <property type="match status" value="1"/>
</dbReference>
<dbReference type="SUPFAM" id="SSF54690">
    <property type="entry name" value="Molybdopterin synthase subunit MoaE"/>
    <property type="match status" value="1"/>
</dbReference>